<dbReference type="PIR" id="A94592">
    <property type="entry name" value="EILXCH"/>
</dbReference>
<dbReference type="PDB" id="1ACB">
    <property type="method" value="X-ray"/>
    <property type="resolution" value="2.00 A"/>
    <property type="chains" value="I=1-70"/>
</dbReference>
<dbReference type="PDB" id="1CSE">
    <property type="method" value="X-ray"/>
    <property type="resolution" value="1.20 A"/>
    <property type="chains" value="I=1-70"/>
</dbReference>
<dbReference type="PDB" id="1EGL">
    <property type="method" value="NMR"/>
    <property type="chains" value="A=1-70"/>
</dbReference>
<dbReference type="PDB" id="1EGP">
    <property type="method" value="X-ray"/>
    <property type="resolution" value="2.00 A"/>
    <property type="chains" value="A=1-45, B=46-70"/>
</dbReference>
<dbReference type="PDB" id="1MEE">
    <property type="method" value="X-ray"/>
    <property type="resolution" value="2.00 A"/>
    <property type="chains" value="I=7-70"/>
</dbReference>
<dbReference type="PDB" id="1SBN">
    <property type="method" value="X-ray"/>
    <property type="resolution" value="2.10 A"/>
    <property type="chains" value="I=1-70"/>
</dbReference>
<dbReference type="PDB" id="1SIB">
    <property type="method" value="X-ray"/>
    <property type="resolution" value="2.40 A"/>
    <property type="chains" value="I=1-70"/>
</dbReference>
<dbReference type="PDB" id="1TEC">
    <property type="method" value="X-ray"/>
    <property type="resolution" value="2.20 A"/>
    <property type="chains" value="I=1-70"/>
</dbReference>
<dbReference type="PDB" id="2SEC">
    <property type="method" value="X-ray"/>
    <property type="resolution" value="1.80 A"/>
    <property type="chains" value="I=1-70"/>
</dbReference>
<dbReference type="PDB" id="2TEC">
    <property type="method" value="X-ray"/>
    <property type="resolution" value="1.98 A"/>
    <property type="chains" value="I=1-70"/>
</dbReference>
<dbReference type="PDB" id="3TEC">
    <property type="method" value="X-ray"/>
    <property type="resolution" value="2.00 A"/>
    <property type="chains" value="I=1-70"/>
</dbReference>
<dbReference type="PDB" id="4B1T">
    <property type="method" value="X-ray"/>
    <property type="resolution" value="1.78 A"/>
    <property type="chains" value="B/D=1-70"/>
</dbReference>
<dbReference type="PDB" id="4B2A">
    <property type="method" value="X-ray"/>
    <property type="resolution" value="1.89 A"/>
    <property type="chains" value="B/D=5-70"/>
</dbReference>
<dbReference type="PDB" id="4B2B">
    <property type="method" value="X-ray"/>
    <property type="resolution" value="1.36 A"/>
    <property type="chains" value="B/D=1-70"/>
</dbReference>
<dbReference type="PDB" id="4B2C">
    <property type="method" value="X-ray"/>
    <property type="resolution" value="1.43 A"/>
    <property type="chains" value="B/D=1-70"/>
</dbReference>
<dbReference type="PDB" id="4H4F">
    <property type="method" value="X-ray"/>
    <property type="resolution" value="1.90 A"/>
    <property type="chains" value="B=8-70"/>
</dbReference>
<dbReference type="PDB" id="7AM6">
    <property type="method" value="X-ray"/>
    <property type="resolution" value="2.70 A"/>
    <property type="chains" value="P=37-49"/>
</dbReference>
<dbReference type="PDB" id="7AM7">
    <property type="method" value="X-ray"/>
    <property type="resolution" value="2.61 A"/>
    <property type="chains" value="P=37-49"/>
</dbReference>
<dbReference type="PDBsum" id="1ACB"/>
<dbReference type="PDBsum" id="1CSE"/>
<dbReference type="PDBsum" id="1EGL"/>
<dbReference type="PDBsum" id="1EGP"/>
<dbReference type="PDBsum" id="1MEE"/>
<dbReference type="PDBsum" id="1SBN"/>
<dbReference type="PDBsum" id="1SIB"/>
<dbReference type="PDBsum" id="1TEC"/>
<dbReference type="PDBsum" id="2SEC"/>
<dbReference type="PDBsum" id="2TEC"/>
<dbReference type="PDBsum" id="3TEC"/>
<dbReference type="PDBsum" id="4B1T"/>
<dbReference type="PDBsum" id="4B2A"/>
<dbReference type="PDBsum" id="4B2B"/>
<dbReference type="PDBsum" id="4B2C"/>
<dbReference type="PDBsum" id="4H4F"/>
<dbReference type="PDBsum" id="7AM6"/>
<dbReference type="PDBsum" id="7AM7"/>
<dbReference type="BMRB" id="P01051"/>
<dbReference type="SMR" id="P01051"/>
<dbReference type="DIP" id="DIP-6069N"/>
<dbReference type="MINT" id="P01051"/>
<dbReference type="MEROPS" id="I13.001"/>
<dbReference type="EvolutionaryTrace" id="P01051"/>
<dbReference type="GO" id="GO:0004867">
    <property type="term" value="F:serine-type endopeptidase inhibitor activity"/>
    <property type="evidence" value="ECO:0007669"/>
    <property type="project" value="UniProtKB-KW"/>
</dbReference>
<dbReference type="GO" id="GO:0009611">
    <property type="term" value="P:response to wounding"/>
    <property type="evidence" value="ECO:0007669"/>
    <property type="project" value="InterPro"/>
</dbReference>
<dbReference type="Gene3D" id="3.30.10.10">
    <property type="entry name" value="Trypsin Inhibitor V, subunit A"/>
    <property type="match status" value="1"/>
</dbReference>
<dbReference type="InterPro" id="IPR000864">
    <property type="entry name" value="Prot_inh_pot1"/>
</dbReference>
<dbReference type="InterPro" id="IPR036354">
    <property type="entry name" value="Prot_inh_pot1_sf"/>
</dbReference>
<dbReference type="PANTHER" id="PTHR33091">
    <property type="entry name" value="PROTEIN, PUTATIVE, EXPRESSED-RELATED"/>
    <property type="match status" value="1"/>
</dbReference>
<dbReference type="PANTHER" id="PTHR33091:SF29">
    <property type="entry name" value="SUBTILISIN INHIBITOR 1"/>
    <property type="match status" value="1"/>
</dbReference>
<dbReference type="Pfam" id="PF00280">
    <property type="entry name" value="potato_inhibit"/>
    <property type="match status" value="1"/>
</dbReference>
<dbReference type="PRINTS" id="PR00292">
    <property type="entry name" value="POTATOINHBTR"/>
</dbReference>
<dbReference type="SUPFAM" id="SSF54654">
    <property type="entry name" value="CI-2 family of serine protease inhibitors"/>
    <property type="match status" value="1"/>
</dbReference>
<dbReference type="PROSITE" id="PS00285">
    <property type="entry name" value="POTATO_INHIBITOR"/>
    <property type="match status" value="1"/>
</dbReference>
<sequence>TEFGSELKSFPEVVGKTVDQAREYFTLHYPQYDVYFLPEGSPVTLDLRYNRVRVFYNPGTNVVNHVPHVG</sequence>
<keyword id="KW-0002">3D-structure</keyword>
<keyword id="KW-0903">Direct protein sequencing</keyword>
<keyword id="KW-0646">Protease inhibitor</keyword>
<keyword id="KW-0722">Serine protease inhibitor</keyword>
<accession>P01051</accession>
<protein>
    <recommendedName>
        <fullName>Eglin C</fullName>
    </recommendedName>
</protein>
<comment type="function">
    <text>Inhibits both elastase and cathepsin G.</text>
</comment>
<comment type="similarity">
    <text evidence="1">Belongs to the protease inhibitor I13 (potato type I serine protease inhibitor) family.</text>
</comment>
<organism>
    <name type="scientific">Hirudo medicinalis</name>
    <name type="common">Medicinal leech</name>
    <dbReference type="NCBI Taxonomy" id="6421"/>
    <lineage>
        <taxon>Eukaryota</taxon>
        <taxon>Metazoa</taxon>
        <taxon>Spiralia</taxon>
        <taxon>Lophotrochozoa</taxon>
        <taxon>Annelida</taxon>
        <taxon>Clitellata</taxon>
        <taxon>Hirudinea</taxon>
        <taxon>Hirudinida</taxon>
        <taxon>Hirudiniformes</taxon>
        <taxon>Hirudinidae</taxon>
        <taxon>Hirudo</taxon>
    </lineage>
</organism>
<proteinExistence type="evidence at protein level"/>
<feature type="chain" id="PRO_0000217645" description="Eglin C">
    <location>
        <begin position="1"/>
        <end position="70"/>
    </location>
</feature>
<feature type="site" description="Reactive bond">
    <location>
        <begin position="45"/>
        <end position="46"/>
    </location>
</feature>
<feature type="helix" evidence="2">
    <location>
        <begin position="11"/>
        <end position="13"/>
    </location>
</feature>
<feature type="helix" evidence="2">
    <location>
        <begin position="18"/>
        <end position="28"/>
    </location>
</feature>
<feature type="strand" evidence="2">
    <location>
        <begin position="32"/>
        <end position="38"/>
    </location>
</feature>
<feature type="strand" evidence="3">
    <location>
        <begin position="42"/>
        <end position="44"/>
    </location>
</feature>
<feature type="strand" evidence="2">
    <location>
        <begin position="48"/>
        <end position="57"/>
    </location>
</feature>
<feature type="turn" evidence="2">
    <location>
        <begin position="58"/>
        <end position="61"/>
    </location>
</feature>
<feature type="strand" evidence="2">
    <location>
        <begin position="68"/>
        <end position="70"/>
    </location>
</feature>
<name>ICIC_HIRME</name>
<reference key="1">
    <citation type="journal article" date="1980" name="Hoppe-Seyler's Z. Physiol. Chem.">
        <title>Structure of the elastase-cathepsin G inhibitor of the leech Hirudo medicinalis.</title>
        <authorList>
            <person name="Seemueller U."/>
            <person name="Eulitz M."/>
            <person name="Fritz H."/>
            <person name="Strobl A."/>
        </authorList>
    </citation>
    <scope>PROTEIN SEQUENCE</scope>
</reference>
<reference key="2">
    <citation type="submission" date="1982-03" db="PIR data bank">
        <authorList>
            <person name="Fritz H."/>
            <person name="Seemuller U."/>
        </authorList>
    </citation>
    <scope>SEQUENCE REVISION TO 33</scope>
</reference>
<reference key="3">
    <citation type="journal article" date="1986" name="EMBO J.">
        <title>Refined 1.2 A crystal structure of the complex formed between subtilisin Carlsberg and the inhibitor eglin c. Molecular structure of eglin and its detailed interaction with subtilisin.</title>
        <authorList>
            <person name="Bode W."/>
            <person name="Papamokos E."/>
            <person name="Musil D."/>
            <person name="Seemueller U."/>
            <person name="Fritz H."/>
        </authorList>
    </citation>
    <scope>X-RAY CRYSTALLOGRAPHY (1.2 ANGSTROMS) IN COMPLEX WITH SUBTILISIN</scope>
</reference>
<reference key="4">
    <citation type="journal article" date="1990" name="Biochemistry">
        <title>Sequence-specific 1H NMR assignments and secondary structure of eglin c.</title>
        <authorList>
            <person name="Hyberts S.G."/>
            <person name="Wagner G."/>
        </authorList>
    </citation>
    <scope>STRUCTURE BY NMR</scope>
</reference>
<reference key="5">
    <citation type="journal article" date="1992" name="FEBS Lett.">
        <title>X-ray crystal structure of the serine proteinase inhibitor eglin c at 1.95-A resolution.</title>
        <authorList>
            <person name="Hipler K."/>
            <person name="Priestle J.P."/>
            <person name="Rahuel J."/>
            <person name="Gruetter M.G."/>
        </authorList>
    </citation>
    <scope>X-RAY CRYSTALLOGRAPHY (1.95 ANGSTROMS)</scope>
</reference>
<reference key="6">
    <citation type="journal article" date="1993" name="FEBS Lett.">
        <title>Structure of the proteinase inhibitor eglin c with hydrolysed reactive centre at 2.0-A resolution.</title>
        <authorList>
            <person name="Betzel C."/>
            <person name="Dauter Z."/>
            <person name="Genov N."/>
            <person name="Lamzin V."/>
            <person name="Navaza J."/>
            <person name="Schnebli H.P."/>
            <person name="Visanji M."/>
            <person name="Wilson K.S."/>
        </authorList>
    </citation>
    <scope>X-RAY CRYSTALLOGRAPHY (2.0 ANGSTROMS)</scope>
</reference>
<reference key="7">
    <citation type="journal article" date="2013" name="J. Biol. Chem.">
        <title>Long-range electrostatic complementarity governs substrate recognition by human chymotrypsin C, a key regulator of digestive enzyme activation.</title>
        <authorList>
            <person name="Batra J."/>
            <person name="Szabo A."/>
            <person name="Caulfield T.R."/>
            <person name="Soares A.S."/>
            <person name="Sahin-Toth M."/>
            <person name="Radisky E.S."/>
        </authorList>
    </citation>
    <scope>X-RAY CRYSTALLOGRAPHY (1.9 ANGSTROMS) OF 4-70 IN COMPLEX WITH HUMAN CTRC</scope>
</reference>
<evidence type="ECO:0000305" key="1"/>
<evidence type="ECO:0007829" key="2">
    <source>
        <dbReference type="PDB" id="1CSE"/>
    </source>
</evidence>
<evidence type="ECO:0007829" key="3">
    <source>
        <dbReference type="PDB" id="4B2B"/>
    </source>
</evidence>